<proteinExistence type="inferred from homology"/>
<feature type="chain" id="PRO_1000096479" description="Triosephosphate isomerase">
    <location>
        <begin position="1"/>
        <end position="254"/>
    </location>
</feature>
<feature type="active site" description="Electrophile" evidence="1">
    <location>
        <position position="96"/>
    </location>
</feature>
<feature type="active site" description="Proton acceptor" evidence="1">
    <location>
        <position position="169"/>
    </location>
</feature>
<feature type="binding site" evidence="1">
    <location>
        <begin position="9"/>
        <end position="11"/>
    </location>
    <ligand>
        <name>substrate</name>
    </ligand>
</feature>
<feature type="binding site" evidence="1">
    <location>
        <position position="175"/>
    </location>
    <ligand>
        <name>substrate</name>
    </ligand>
</feature>
<feature type="binding site" evidence="1">
    <location>
        <position position="215"/>
    </location>
    <ligand>
        <name>substrate</name>
    </ligand>
</feature>
<feature type="binding site" evidence="1">
    <location>
        <begin position="236"/>
        <end position="237"/>
    </location>
    <ligand>
        <name>substrate</name>
    </ligand>
</feature>
<name>TPIS_BORHD</name>
<organism>
    <name type="scientific">Borrelia hermsii (strain HS1 / DAH)</name>
    <dbReference type="NCBI Taxonomy" id="314723"/>
    <lineage>
        <taxon>Bacteria</taxon>
        <taxon>Pseudomonadati</taxon>
        <taxon>Spirochaetota</taxon>
        <taxon>Spirochaetia</taxon>
        <taxon>Spirochaetales</taxon>
        <taxon>Borreliaceae</taxon>
        <taxon>Borrelia</taxon>
    </lineage>
</organism>
<gene>
    <name evidence="1" type="primary">tpiA</name>
    <name type="ordered locus">BH0055</name>
</gene>
<keyword id="KW-0963">Cytoplasm</keyword>
<keyword id="KW-0312">Gluconeogenesis</keyword>
<keyword id="KW-0324">Glycolysis</keyword>
<keyword id="KW-0413">Isomerase</keyword>
<reference key="1">
    <citation type="submission" date="2004-12" db="EMBL/GenBank/DDBJ databases">
        <title>The genome sequence of Borrelia hermsii and Borrelia turicatae: comparative analysis of two agents of endemic N. America relapsing fever.</title>
        <authorList>
            <person name="Porcella S.F."/>
            <person name="Raffel S.J."/>
            <person name="Schrumpf M.E."/>
            <person name="Montgomery B."/>
            <person name="Smith T."/>
            <person name="Schwan T.G."/>
        </authorList>
    </citation>
    <scope>NUCLEOTIDE SEQUENCE [LARGE SCALE GENOMIC DNA]</scope>
    <source>
        <strain>HS1 / DAH</strain>
    </source>
</reference>
<dbReference type="EC" id="5.3.1.1" evidence="1"/>
<dbReference type="EMBL" id="CP000048">
    <property type="protein sequence ID" value="AAX16577.1"/>
    <property type="molecule type" value="Genomic_DNA"/>
</dbReference>
<dbReference type="RefSeq" id="WP_012421834.1">
    <property type="nucleotide sequence ID" value="NZ_CP073136.1"/>
</dbReference>
<dbReference type="SMR" id="B2S1P0"/>
<dbReference type="GeneID" id="71842867"/>
<dbReference type="KEGG" id="bhr:BH0055"/>
<dbReference type="HOGENOM" id="CLU_024251_2_3_12"/>
<dbReference type="UniPathway" id="UPA00109">
    <property type="reaction ID" value="UER00189"/>
</dbReference>
<dbReference type="UniPathway" id="UPA00138"/>
<dbReference type="Proteomes" id="UP000008834">
    <property type="component" value="Chromosome"/>
</dbReference>
<dbReference type="GO" id="GO:0005829">
    <property type="term" value="C:cytosol"/>
    <property type="evidence" value="ECO:0007669"/>
    <property type="project" value="TreeGrafter"/>
</dbReference>
<dbReference type="GO" id="GO:0004807">
    <property type="term" value="F:triose-phosphate isomerase activity"/>
    <property type="evidence" value="ECO:0007669"/>
    <property type="project" value="UniProtKB-UniRule"/>
</dbReference>
<dbReference type="GO" id="GO:0006094">
    <property type="term" value="P:gluconeogenesis"/>
    <property type="evidence" value="ECO:0007669"/>
    <property type="project" value="UniProtKB-UniRule"/>
</dbReference>
<dbReference type="GO" id="GO:0046166">
    <property type="term" value="P:glyceraldehyde-3-phosphate biosynthetic process"/>
    <property type="evidence" value="ECO:0007669"/>
    <property type="project" value="TreeGrafter"/>
</dbReference>
<dbReference type="GO" id="GO:0019563">
    <property type="term" value="P:glycerol catabolic process"/>
    <property type="evidence" value="ECO:0007669"/>
    <property type="project" value="TreeGrafter"/>
</dbReference>
<dbReference type="GO" id="GO:0006096">
    <property type="term" value="P:glycolytic process"/>
    <property type="evidence" value="ECO:0007669"/>
    <property type="project" value="UniProtKB-UniRule"/>
</dbReference>
<dbReference type="CDD" id="cd00311">
    <property type="entry name" value="TIM"/>
    <property type="match status" value="1"/>
</dbReference>
<dbReference type="FunFam" id="3.20.20.70:FF:000016">
    <property type="entry name" value="Triosephosphate isomerase"/>
    <property type="match status" value="1"/>
</dbReference>
<dbReference type="Gene3D" id="3.20.20.70">
    <property type="entry name" value="Aldolase class I"/>
    <property type="match status" value="1"/>
</dbReference>
<dbReference type="HAMAP" id="MF_00147_B">
    <property type="entry name" value="TIM_B"/>
    <property type="match status" value="1"/>
</dbReference>
<dbReference type="InterPro" id="IPR013785">
    <property type="entry name" value="Aldolase_TIM"/>
</dbReference>
<dbReference type="InterPro" id="IPR035990">
    <property type="entry name" value="TIM_sf"/>
</dbReference>
<dbReference type="InterPro" id="IPR022896">
    <property type="entry name" value="TrioseP_Isoase_bac/euk"/>
</dbReference>
<dbReference type="InterPro" id="IPR000652">
    <property type="entry name" value="Triosephosphate_isomerase"/>
</dbReference>
<dbReference type="InterPro" id="IPR020861">
    <property type="entry name" value="Triosephosphate_isomerase_AS"/>
</dbReference>
<dbReference type="NCBIfam" id="TIGR00419">
    <property type="entry name" value="tim"/>
    <property type="match status" value="1"/>
</dbReference>
<dbReference type="PANTHER" id="PTHR21139">
    <property type="entry name" value="TRIOSEPHOSPHATE ISOMERASE"/>
    <property type="match status" value="1"/>
</dbReference>
<dbReference type="PANTHER" id="PTHR21139:SF42">
    <property type="entry name" value="TRIOSEPHOSPHATE ISOMERASE"/>
    <property type="match status" value="1"/>
</dbReference>
<dbReference type="Pfam" id="PF00121">
    <property type="entry name" value="TIM"/>
    <property type="match status" value="1"/>
</dbReference>
<dbReference type="SUPFAM" id="SSF51351">
    <property type="entry name" value="Triosephosphate isomerase (TIM)"/>
    <property type="match status" value="1"/>
</dbReference>
<dbReference type="PROSITE" id="PS00171">
    <property type="entry name" value="TIM_1"/>
    <property type="match status" value="1"/>
</dbReference>
<dbReference type="PROSITE" id="PS51440">
    <property type="entry name" value="TIM_2"/>
    <property type="match status" value="1"/>
</dbReference>
<sequence length="254" mass="27664">MRKMFLAGNWKMHYTSVEAAGVAKQIVDGVQNINDDVVIMITPAFTSLCKVCEVTKGSNVLLGAQNMSYENSGARTSEISPSMLLEFGVDYVILGHSECRTYLGDTDEVINKKILAGLKHPFKYLILCIGETLSERENNKTLDVVLNQIRRGLMSVSESDLKRIILAYEPVWAIGTGKTATKEEAQEVHRAIRLEIESLYSTSAADDIIIQYGGSVNVDNVGGLMGENDIDGALIGGASLKADSFLNIVNKVAK</sequence>
<accession>B2S1P0</accession>
<comment type="function">
    <text evidence="1">Involved in the gluconeogenesis. Catalyzes stereospecifically the conversion of dihydroxyacetone phosphate (DHAP) to D-glyceraldehyde-3-phosphate (G3P).</text>
</comment>
<comment type="catalytic activity">
    <reaction evidence="1">
        <text>D-glyceraldehyde 3-phosphate = dihydroxyacetone phosphate</text>
        <dbReference type="Rhea" id="RHEA:18585"/>
        <dbReference type="ChEBI" id="CHEBI:57642"/>
        <dbReference type="ChEBI" id="CHEBI:59776"/>
        <dbReference type="EC" id="5.3.1.1"/>
    </reaction>
</comment>
<comment type="pathway">
    <text evidence="1">Carbohydrate biosynthesis; gluconeogenesis.</text>
</comment>
<comment type="pathway">
    <text evidence="1">Carbohydrate degradation; glycolysis; D-glyceraldehyde 3-phosphate from glycerone phosphate: step 1/1.</text>
</comment>
<comment type="subunit">
    <text evidence="1">Homodimer.</text>
</comment>
<comment type="subcellular location">
    <subcellularLocation>
        <location evidence="1">Cytoplasm</location>
    </subcellularLocation>
</comment>
<comment type="similarity">
    <text evidence="1">Belongs to the triosephosphate isomerase family.</text>
</comment>
<protein>
    <recommendedName>
        <fullName evidence="1">Triosephosphate isomerase</fullName>
        <shortName evidence="1">TIM</shortName>
        <shortName evidence="1">TPI</shortName>
        <ecNumber evidence="1">5.3.1.1</ecNumber>
    </recommendedName>
    <alternativeName>
        <fullName evidence="1">Triose-phosphate isomerase</fullName>
    </alternativeName>
</protein>
<evidence type="ECO:0000255" key="1">
    <source>
        <dbReference type="HAMAP-Rule" id="MF_00147"/>
    </source>
</evidence>